<organism>
    <name type="scientific">Xanthomonas campestris pv. campestris (strain 8004)</name>
    <dbReference type="NCBI Taxonomy" id="314565"/>
    <lineage>
        <taxon>Bacteria</taxon>
        <taxon>Pseudomonadati</taxon>
        <taxon>Pseudomonadota</taxon>
        <taxon>Gammaproteobacteria</taxon>
        <taxon>Lysobacterales</taxon>
        <taxon>Lysobacteraceae</taxon>
        <taxon>Xanthomonas</taxon>
    </lineage>
</organism>
<name>ACP_XANC8</name>
<sequence>MSTIEERVKKIVVEQLGVKEEEVTTSASFVDDLGADSLDTVELVMALEEEFECEIPDEEAEKITSVQQAIDYVKAHVKS</sequence>
<dbReference type="EMBL" id="CP000050">
    <property type="protein sequence ID" value="AAY50270.1"/>
    <property type="molecule type" value="Genomic_DNA"/>
</dbReference>
<dbReference type="RefSeq" id="WP_002814322.1">
    <property type="nucleotide sequence ID" value="NZ_CP155948.1"/>
</dbReference>
<dbReference type="SMR" id="Q4URQ3"/>
<dbReference type="GeneID" id="97509460"/>
<dbReference type="KEGG" id="xcb:XC_3226"/>
<dbReference type="HOGENOM" id="CLU_108696_5_1_6"/>
<dbReference type="UniPathway" id="UPA00094"/>
<dbReference type="Proteomes" id="UP000000420">
    <property type="component" value="Chromosome"/>
</dbReference>
<dbReference type="GO" id="GO:0005829">
    <property type="term" value="C:cytosol"/>
    <property type="evidence" value="ECO:0007669"/>
    <property type="project" value="TreeGrafter"/>
</dbReference>
<dbReference type="GO" id="GO:0016020">
    <property type="term" value="C:membrane"/>
    <property type="evidence" value="ECO:0007669"/>
    <property type="project" value="GOC"/>
</dbReference>
<dbReference type="GO" id="GO:0000035">
    <property type="term" value="F:acyl binding"/>
    <property type="evidence" value="ECO:0007669"/>
    <property type="project" value="TreeGrafter"/>
</dbReference>
<dbReference type="GO" id="GO:0000036">
    <property type="term" value="F:acyl carrier activity"/>
    <property type="evidence" value="ECO:0007669"/>
    <property type="project" value="UniProtKB-UniRule"/>
</dbReference>
<dbReference type="GO" id="GO:0009245">
    <property type="term" value="P:lipid A biosynthetic process"/>
    <property type="evidence" value="ECO:0007669"/>
    <property type="project" value="TreeGrafter"/>
</dbReference>
<dbReference type="FunFam" id="1.10.1200.10:FF:000001">
    <property type="entry name" value="Acyl carrier protein"/>
    <property type="match status" value="1"/>
</dbReference>
<dbReference type="Gene3D" id="1.10.1200.10">
    <property type="entry name" value="ACP-like"/>
    <property type="match status" value="1"/>
</dbReference>
<dbReference type="HAMAP" id="MF_01217">
    <property type="entry name" value="Acyl_carrier"/>
    <property type="match status" value="1"/>
</dbReference>
<dbReference type="InterPro" id="IPR003231">
    <property type="entry name" value="ACP"/>
</dbReference>
<dbReference type="InterPro" id="IPR036736">
    <property type="entry name" value="ACP-like_sf"/>
</dbReference>
<dbReference type="InterPro" id="IPR009081">
    <property type="entry name" value="PP-bd_ACP"/>
</dbReference>
<dbReference type="InterPro" id="IPR006162">
    <property type="entry name" value="Ppantetheine_attach_site"/>
</dbReference>
<dbReference type="NCBIfam" id="TIGR00517">
    <property type="entry name" value="acyl_carrier"/>
    <property type="match status" value="1"/>
</dbReference>
<dbReference type="NCBIfam" id="NF002148">
    <property type="entry name" value="PRK00982.1-2"/>
    <property type="match status" value="1"/>
</dbReference>
<dbReference type="NCBIfam" id="NF002149">
    <property type="entry name" value="PRK00982.1-3"/>
    <property type="match status" value="1"/>
</dbReference>
<dbReference type="NCBIfam" id="NF002150">
    <property type="entry name" value="PRK00982.1-4"/>
    <property type="match status" value="1"/>
</dbReference>
<dbReference type="NCBIfam" id="NF002151">
    <property type="entry name" value="PRK00982.1-5"/>
    <property type="match status" value="1"/>
</dbReference>
<dbReference type="PANTHER" id="PTHR20863">
    <property type="entry name" value="ACYL CARRIER PROTEIN"/>
    <property type="match status" value="1"/>
</dbReference>
<dbReference type="PANTHER" id="PTHR20863:SF76">
    <property type="entry name" value="CARRIER DOMAIN-CONTAINING PROTEIN"/>
    <property type="match status" value="1"/>
</dbReference>
<dbReference type="Pfam" id="PF00550">
    <property type="entry name" value="PP-binding"/>
    <property type="match status" value="1"/>
</dbReference>
<dbReference type="SUPFAM" id="SSF47336">
    <property type="entry name" value="ACP-like"/>
    <property type="match status" value="1"/>
</dbReference>
<dbReference type="PROSITE" id="PS50075">
    <property type="entry name" value="CARRIER"/>
    <property type="match status" value="1"/>
</dbReference>
<dbReference type="PROSITE" id="PS00012">
    <property type="entry name" value="PHOSPHOPANTETHEINE"/>
    <property type="match status" value="1"/>
</dbReference>
<protein>
    <recommendedName>
        <fullName evidence="1">Acyl carrier protein</fullName>
        <shortName evidence="1">ACP</shortName>
    </recommendedName>
</protein>
<comment type="function">
    <text evidence="1">Carrier of the growing fatty acid chain in fatty acid biosynthesis.</text>
</comment>
<comment type="pathway">
    <text evidence="1">Lipid metabolism; fatty acid biosynthesis.</text>
</comment>
<comment type="subcellular location">
    <subcellularLocation>
        <location evidence="1">Cytoplasm</location>
    </subcellularLocation>
</comment>
<comment type="PTM">
    <text evidence="1">4'-phosphopantetheine is transferred from CoA to a specific serine of apo-ACP by AcpS. This modification is essential for activity because fatty acids are bound in thioester linkage to the sulfhydryl of the prosthetic group.</text>
</comment>
<comment type="similarity">
    <text evidence="1">Belongs to the acyl carrier protein (ACP) family.</text>
</comment>
<gene>
    <name evidence="1" type="primary">acpP</name>
    <name type="ordered locus">XC_3226</name>
</gene>
<keyword id="KW-0963">Cytoplasm</keyword>
<keyword id="KW-0275">Fatty acid biosynthesis</keyword>
<keyword id="KW-0276">Fatty acid metabolism</keyword>
<keyword id="KW-0444">Lipid biosynthesis</keyword>
<keyword id="KW-0443">Lipid metabolism</keyword>
<keyword id="KW-0596">Phosphopantetheine</keyword>
<keyword id="KW-0597">Phosphoprotein</keyword>
<accession>Q4URQ3</accession>
<evidence type="ECO:0000255" key="1">
    <source>
        <dbReference type="HAMAP-Rule" id="MF_01217"/>
    </source>
</evidence>
<evidence type="ECO:0000255" key="2">
    <source>
        <dbReference type="PROSITE-ProRule" id="PRU00258"/>
    </source>
</evidence>
<feature type="chain" id="PRO_1000066718" description="Acyl carrier protein">
    <location>
        <begin position="1"/>
        <end position="79"/>
    </location>
</feature>
<feature type="domain" description="Carrier" evidence="2">
    <location>
        <begin position="2"/>
        <end position="77"/>
    </location>
</feature>
<feature type="modified residue" description="O-(pantetheine 4'-phosphoryl)serine" evidence="2">
    <location>
        <position position="37"/>
    </location>
</feature>
<reference key="1">
    <citation type="journal article" date="2005" name="Genome Res.">
        <title>Comparative and functional genomic analyses of the pathogenicity of phytopathogen Xanthomonas campestris pv. campestris.</title>
        <authorList>
            <person name="Qian W."/>
            <person name="Jia Y."/>
            <person name="Ren S.-X."/>
            <person name="He Y.-Q."/>
            <person name="Feng J.-X."/>
            <person name="Lu L.-F."/>
            <person name="Sun Q."/>
            <person name="Ying G."/>
            <person name="Tang D.-J."/>
            <person name="Tang H."/>
            <person name="Wu W."/>
            <person name="Hao P."/>
            <person name="Wang L."/>
            <person name="Jiang B.-L."/>
            <person name="Zeng S."/>
            <person name="Gu W.-Y."/>
            <person name="Lu G."/>
            <person name="Rong L."/>
            <person name="Tian Y."/>
            <person name="Yao Z."/>
            <person name="Fu G."/>
            <person name="Chen B."/>
            <person name="Fang R."/>
            <person name="Qiang B."/>
            <person name="Chen Z."/>
            <person name="Zhao G.-P."/>
            <person name="Tang J.-L."/>
            <person name="He C."/>
        </authorList>
    </citation>
    <scope>NUCLEOTIDE SEQUENCE [LARGE SCALE GENOMIC DNA]</scope>
    <source>
        <strain>8004</strain>
    </source>
</reference>
<proteinExistence type="inferred from homology"/>